<keyword id="KW-0119">Carbohydrate metabolism</keyword>
<keyword id="KW-1003">Cell membrane</keyword>
<keyword id="KW-0326">Glycosidase</keyword>
<keyword id="KW-0378">Hydrolase</keyword>
<keyword id="KW-0472">Membrane</keyword>
<proteinExistence type="evidence at protein level"/>
<protein>
    <recommendedName>
        <fullName evidence="3">Alpha-xylosidase XylQ</fullName>
        <ecNumber evidence="2">3.2.1.177</ecNumber>
    </recommendedName>
</protein>
<sequence length="762" mass="86726">MKFTNGYWLNREEYDVNSPKETYDAQQNGKTITAFAPYTRIMSRGDQLNLGTTTITLTSPVENVIGVKLEHFDTNEHGPEFKINNLDPEVAIEVNDQVASLQSGDLKVTLPLRTDFEMKFTANGQLVTQSETKPQATIWNHDTKVNYMREQLSMGIDEKIYGLGERFTNFVKNGQVVDTWNQDGGTGSEQAYKNIPFYISSNGYGVFVDESQRVSFEIGSENVDRVQFSTEGQSLQYYVIYGPTPKEVLHRYTQLTGAIKLPPAWSFGLWLTTSFTTDYSEETVLKFIDGMQEHHIPLDVFHFDCFWQKGFEWCTLEWDKEQFPDPEGLLKKIHDRGIKVCVWLNPYIAQKSPLFKEAKDKGYLLTRENGDIWQWDLWQAGNGFVDFTNPAAVKWYQDKLKVLLDMGVDSFKTDFGERIPAEDVKFFDGSNPQQEHNYYTLQYNRAVYEVIQQEKGADEAVLFARSQRLVHNPIQYTGAATISRSTAQCVIQLRGGLSFLLSGFGFWSHDIGGFEDGPGTPTADLYKRWSQFGLLSSHSRYHGSDVYRVPWNFDDEAVENTRKYVNKLSLMPYIYTEAAHAAAAYGNPLMRPMFLEFGDDDNVYDNATQYMFGSKILVAPIFNDQGKAHFYLPSGKWTSILDGKVYQAPRTGEWVNEVFDELDLPVLVRQNSIIVRNEKAVDAAYDYTKDVDIHLYQIQDGNVSSKVVDEHGQDTAEIKVERANGRIVINTVGLTGDSTVYVHENNDTIKLSLVDGKAEVTL</sequence>
<comment type="function">
    <text evidence="2">Involved in the metabolism of isoprimeverose. Hydrolyzes isoprimeverose into equimolar amounts of glucose and xylose. In vitro, can also use p-nitrophenyl-alpha-D-xylopyranoside (alpha-p-NPX).</text>
</comment>
<comment type="catalytic activity">
    <reaction evidence="2">
        <text>Hydrolysis of terminal, non-reducing alpha-D-xylose residues with release of alpha-D-xylose.</text>
        <dbReference type="EC" id="3.2.1.177"/>
    </reaction>
</comment>
<comment type="biophysicochemical properties">
    <kinetics>
        <KM evidence="2">0.2 mM for isoprimeverose</KM>
        <KM evidence="2">1.3 mM for p-nitrophenyl-alpha-D-xylopyranoside</KM>
        <Vmax evidence="2">446.0 nmol/min/mg enzyme with isoprimeverose as substrate</Vmax>
        <Vmax evidence="2">54.0 nmol/min/mg enzyme with p-nitrophenyl-alpha-D-xylopyranoside as substrate</Vmax>
    </kinetics>
</comment>
<comment type="subcellular location">
    <subcellularLocation>
        <location evidence="2">Cell membrane</location>
        <topology evidence="2">Peripheral membrane protein</topology>
        <orientation evidence="2">Cytoplasmic side</orientation>
    </subcellularLocation>
</comment>
<comment type="induction">
    <text evidence="2">Expression is negatively regulated by XylR and is subject to CcpA-dependent catabolite repression.</text>
</comment>
<comment type="disruption phenotype">
    <text evidence="2">XylP-xylQ double mutant retains the ability to ferment xylose but is impaired in its ability to ferment isoprimeverose.</text>
</comment>
<comment type="similarity">
    <text evidence="4">Belongs to the glycosyl hydrolase 31 family.</text>
</comment>
<evidence type="ECO:0000250" key="1">
    <source>
        <dbReference type="UniProtKB" id="P31434"/>
    </source>
</evidence>
<evidence type="ECO:0000269" key="2">
    <source>
    </source>
</evidence>
<evidence type="ECO:0000303" key="3">
    <source>
    </source>
</evidence>
<evidence type="ECO:0000305" key="4"/>
<accession>P96793</accession>
<feature type="chain" id="PRO_0000440947" description="Alpha-xylosidase XylQ">
    <location>
        <begin position="1"/>
        <end position="762"/>
    </location>
</feature>
<feature type="active site" description="Nucleophile" evidence="1">
    <location>
        <position position="414"/>
    </location>
</feature>
<feature type="active site" evidence="1">
    <location>
        <position position="417"/>
    </location>
</feature>
<dbReference type="EC" id="3.2.1.177" evidence="2"/>
<dbReference type="EMBL" id="U89276">
    <property type="protein sequence ID" value="AAC62251.1"/>
    <property type="molecule type" value="Genomic_DNA"/>
</dbReference>
<dbReference type="SMR" id="P96793"/>
<dbReference type="STRING" id="1589.GCA_001188985_00556"/>
<dbReference type="CAZy" id="GH31">
    <property type="family name" value="Glycoside Hydrolase Family 31"/>
</dbReference>
<dbReference type="GO" id="GO:0009898">
    <property type="term" value="C:cytoplasmic side of plasma membrane"/>
    <property type="evidence" value="ECO:0000314"/>
    <property type="project" value="UniProtKB"/>
</dbReference>
<dbReference type="GO" id="GO:0061634">
    <property type="term" value="F:alpha-D-xyloside xylohydrolase"/>
    <property type="evidence" value="ECO:0000314"/>
    <property type="project" value="UniProtKB"/>
</dbReference>
<dbReference type="GO" id="GO:0030246">
    <property type="term" value="F:carbohydrate binding"/>
    <property type="evidence" value="ECO:0007669"/>
    <property type="project" value="InterPro"/>
</dbReference>
<dbReference type="GO" id="GO:0005975">
    <property type="term" value="P:carbohydrate metabolic process"/>
    <property type="evidence" value="ECO:0000314"/>
    <property type="project" value="UniProtKB"/>
</dbReference>
<dbReference type="CDD" id="cd14752">
    <property type="entry name" value="GH31_N"/>
    <property type="match status" value="1"/>
</dbReference>
<dbReference type="CDD" id="cd06593">
    <property type="entry name" value="GH31_xylosidase_YicI"/>
    <property type="match status" value="1"/>
</dbReference>
<dbReference type="FunFam" id="3.20.20.80:FF:000053">
    <property type="entry name" value="Alpha-xylosidase YicI"/>
    <property type="match status" value="1"/>
</dbReference>
<dbReference type="FunFam" id="2.60.40.1760:FF:000009">
    <property type="entry name" value="Sugar hydrolase"/>
    <property type="match status" value="1"/>
</dbReference>
<dbReference type="Gene3D" id="3.20.20.80">
    <property type="entry name" value="Glycosidases"/>
    <property type="match status" value="1"/>
</dbReference>
<dbReference type="Gene3D" id="2.60.40.1760">
    <property type="entry name" value="glycosyl hydrolase (family 31)"/>
    <property type="match status" value="1"/>
</dbReference>
<dbReference type="Gene3D" id="2.60.40.1180">
    <property type="entry name" value="Golgi alpha-mannosidase II"/>
    <property type="match status" value="2"/>
</dbReference>
<dbReference type="InterPro" id="IPR050985">
    <property type="entry name" value="Alpha-glycosidase_related"/>
</dbReference>
<dbReference type="InterPro" id="IPR011013">
    <property type="entry name" value="Gal_mutarotase_sf_dom"/>
</dbReference>
<dbReference type="InterPro" id="IPR048395">
    <property type="entry name" value="Glyco_hydro_31_C"/>
</dbReference>
<dbReference type="InterPro" id="IPR025887">
    <property type="entry name" value="Glyco_hydro_31_N_dom"/>
</dbReference>
<dbReference type="InterPro" id="IPR000322">
    <property type="entry name" value="Glyco_hydro_31_TIM"/>
</dbReference>
<dbReference type="InterPro" id="IPR013780">
    <property type="entry name" value="Glyco_hydro_b"/>
</dbReference>
<dbReference type="InterPro" id="IPR017853">
    <property type="entry name" value="Glycoside_hydrolase_SF"/>
</dbReference>
<dbReference type="NCBIfam" id="NF007940">
    <property type="entry name" value="PRK10658.1"/>
    <property type="match status" value="1"/>
</dbReference>
<dbReference type="PANTHER" id="PTHR43053">
    <property type="entry name" value="GLYCOSIDASE FAMILY 31"/>
    <property type="match status" value="1"/>
</dbReference>
<dbReference type="PANTHER" id="PTHR43053:SF4">
    <property type="entry name" value="MYOGENESIS-REGULATING GLYCOSIDASE"/>
    <property type="match status" value="1"/>
</dbReference>
<dbReference type="Pfam" id="PF13802">
    <property type="entry name" value="Gal_mutarotas_2"/>
    <property type="match status" value="1"/>
</dbReference>
<dbReference type="Pfam" id="PF01055">
    <property type="entry name" value="Glyco_hydro_31_2nd"/>
    <property type="match status" value="1"/>
</dbReference>
<dbReference type="Pfam" id="PF21365">
    <property type="entry name" value="Glyco_hydro_31_3rd"/>
    <property type="match status" value="1"/>
</dbReference>
<dbReference type="SUPFAM" id="SSF51445">
    <property type="entry name" value="(Trans)glycosidases"/>
    <property type="match status" value="1"/>
</dbReference>
<dbReference type="SUPFAM" id="SSF74650">
    <property type="entry name" value="Galactose mutarotase-like"/>
    <property type="match status" value="1"/>
</dbReference>
<dbReference type="SUPFAM" id="SSF51011">
    <property type="entry name" value="Glycosyl hydrolase domain"/>
    <property type="match status" value="1"/>
</dbReference>
<dbReference type="SUPFAM" id="SSF117125">
    <property type="entry name" value="Putative glucosidase YicI, C-terminal domain"/>
    <property type="match status" value="1"/>
</dbReference>
<organism>
    <name type="scientific">Lactiplantibacillus pentosus</name>
    <name type="common">Lactobacillus pentosus</name>
    <dbReference type="NCBI Taxonomy" id="1589"/>
    <lineage>
        <taxon>Bacteria</taxon>
        <taxon>Bacillati</taxon>
        <taxon>Bacillota</taxon>
        <taxon>Bacilli</taxon>
        <taxon>Lactobacillales</taxon>
        <taxon>Lactobacillaceae</taxon>
        <taxon>Lactiplantibacillus</taxon>
    </lineage>
</organism>
<reference key="1">
    <citation type="journal article" date="1998" name="J. Bacteriol.">
        <title>Cloning, sequence analysis, and characterization of the genes involved in isoprimeverose metabolism in Lactobacillus pentosus.</title>
        <authorList>
            <person name="Chaillou S."/>
            <person name="Lokman B.C."/>
            <person name="Leer R.J."/>
            <person name="Posthuma C."/>
            <person name="Postma P.W."/>
            <person name="Pouwels P.H."/>
        </authorList>
    </citation>
    <scope>NUCLEOTIDE SEQUENCE [GENOMIC DNA]</scope>
    <scope>FUNCTION</scope>
    <scope>CATALYTIC ACTIVITY</scope>
    <scope>BIOPHYSICOCHEMICAL PROPERTIES</scope>
    <scope>SUBCELLULAR LOCATION</scope>
    <scope>INDUCTION</scope>
    <scope>DISRUPTION PHENOTYPE</scope>
    <source>
        <strain>MD353</strain>
    </source>
</reference>
<name>XYLQ_LACPE</name>
<gene>
    <name evidence="3" type="primary">xylQ</name>
</gene>